<name>SFSA_SHELP</name>
<accession>A3QHP6</accession>
<gene>
    <name evidence="1" type="primary">sfsA</name>
    <name type="ordered locus">Shew_3128</name>
</gene>
<dbReference type="EMBL" id="CP000606">
    <property type="protein sequence ID" value="ABO24994.1"/>
    <property type="molecule type" value="Genomic_DNA"/>
</dbReference>
<dbReference type="RefSeq" id="WP_011866924.1">
    <property type="nucleotide sequence ID" value="NC_009092.1"/>
</dbReference>
<dbReference type="SMR" id="A3QHP6"/>
<dbReference type="STRING" id="323850.Shew_3128"/>
<dbReference type="KEGG" id="slo:Shew_3128"/>
<dbReference type="eggNOG" id="COG1489">
    <property type="taxonomic scope" value="Bacteria"/>
</dbReference>
<dbReference type="HOGENOM" id="CLU_052299_2_0_6"/>
<dbReference type="OrthoDB" id="9802365at2"/>
<dbReference type="Proteomes" id="UP000001558">
    <property type="component" value="Chromosome"/>
</dbReference>
<dbReference type="GO" id="GO:0003677">
    <property type="term" value="F:DNA binding"/>
    <property type="evidence" value="ECO:0007669"/>
    <property type="project" value="InterPro"/>
</dbReference>
<dbReference type="CDD" id="cd22359">
    <property type="entry name" value="SfsA-like_bacterial"/>
    <property type="match status" value="1"/>
</dbReference>
<dbReference type="FunFam" id="2.40.50.580:FF:000001">
    <property type="entry name" value="Sugar fermentation stimulation protein A"/>
    <property type="match status" value="1"/>
</dbReference>
<dbReference type="FunFam" id="3.40.1350.60:FF:000001">
    <property type="entry name" value="Sugar fermentation stimulation protein A"/>
    <property type="match status" value="1"/>
</dbReference>
<dbReference type="Gene3D" id="2.40.50.580">
    <property type="match status" value="1"/>
</dbReference>
<dbReference type="Gene3D" id="3.40.1350.60">
    <property type="match status" value="1"/>
</dbReference>
<dbReference type="HAMAP" id="MF_00095">
    <property type="entry name" value="SfsA"/>
    <property type="match status" value="1"/>
</dbReference>
<dbReference type="InterPro" id="IPR005224">
    <property type="entry name" value="SfsA"/>
</dbReference>
<dbReference type="InterPro" id="IPR040452">
    <property type="entry name" value="SfsA_C"/>
</dbReference>
<dbReference type="InterPro" id="IPR041465">
    <property type="entry name" value="SfsA_N"/>
</dbReference>
<dbReference type="NCBIfam" id="TIGR00230">
    <property type="entry name" value="sfsA"/>
    <property type="match status" value="1"/>
</dbReference>
<dbReference type="PANTHER" id="PTHR30545">
    <property type="entry name" value="SUGAR FERMENTATION STIMULATION PROTEIN A"/>
    <property type="match status" value="1"/>
</dbReference>
<dbReference type="PANTHER" id="PTHR30545:SF2">
    <property type="entry name" value="SUGAR FERMENTATION STIMULATION PROTEIN A"/>
    <property type="match status" value="1"/>
</dbReference>
<dbReference type="Pfam" id="PF03749">
    <property type="entry name" value="SfsA"/>
    <property type="match status" value="1"/>
</dbReference>
<dbReference type="Pfam" id="PF17746">
    <property type="entry name" value="SfsA_N"/>
    <property type="match status" value="1"/>
</dbReference>
<comment type="similarity">
    <text evidence="1">Belongs to the SfsA family.</text>
</comment>
<organism>
    <name type="scientific">Shewanella loihica (strain ATCC BAA-1088 / PV-4)</name>
    <dbReference type="NCBI Taxonomy" id="323850"/>
    <lineage>
        <taxon>Bacteria</taxon>
        <taxon>Pseudomonadati</taxon>
        <taxon>Pseudomonadota</taxon>
        <taxon>Gammaproteobacteria</taxon>
        <taxon>Alteromonadales</taxon>
        <taxon>Shewanellaceae</taxon>
        <taxon>Shewanella</taxon>
    </lineage>
</organism>
<evidence type="ECO:0000255" key="1">
    <source>
        <dbReference type="HAMAP-Rule" id="MF_00095"/>
    </source>
</evidence>
<proteinExistence type="inferred from homology"/>
<reference key="1">
    <citation type="submission" date="2007-03" db="EMBL/GenBank/DDBJ databases">
        <title>Complete sequence of Shewanella loihica PV-4.</title>
        <authorList>
            <consortium name="US DOE Joint Genome Institute"/>
            <person name="Copeland A."/>
            <person name="Lucas S."/>
            <person name="Lapidus A."/>
            <person name="Barry K."/>
            <person name="Detter J.C."/>
            <person name="Glavina del Rio T."/>
            <person name="Hammon N."/>
            <person name="Israni S."/>
            <person name="Dalin E."/>
            <person name="Tice H."/>
            <person name="Pitluck S."/>
            <person name="Chain P."/>
            <person name="Malfatti S."/>
            <person name="Shin M."/>
            <person name="Vergez L."/>
            <person name="Schmutz J."/>
            <person name="Larimer F."/>
            <person name="Land M."/>
            <person name="Hauser L."/>
            <person name="Kyrpides N."/>
            <person name="Mikhailova N."/>
            <person name="Romine M.F."/>
            <person name="Serres G."/>
            <person name="Fredrickson J."/>
            <person name="Tiedje J."/>
            <person name="Richardson P."/>
        </authorList>
    </citation>
    <scope>NUCLEOTIDE SEQUENCE [LARGE SCALE GENOMIC DNA]</scope>
    <source>
        <strain>ATCC BAA-1088 / PV-4</strain>
    </source>
</reference>
<sequence length="234" mass="26116">MIFIPPFEQGKLLRRYKRFLADVLLDDGTEITIHCPNTGSMRNCLFPGERVWFSTSDNPKRKYAHTWEQAASDEGHIIGINTGRANALAAEAIEAGVISELTGYDRLRREVKYGSENSRIDLLLESEDKPACYIEVKSCTLLEQGQGYFPDAVTTRGQKHLRELMEMVKQGHRAVLLFVVQHTGITTVAAARHIDPEYAELLTQAHQAGVEILAYSCELSPSAAKLIKSCPVKL</sequence>
<keyword id="KW-1185">Reference proteome</keyword>
<protein>
    <recommendedName>
        <fullName evidence="1">Sugar fermentation stimulation protein homolog</fullName>
    </recommendedName>
</protein>
<feature type="chain" id="PRO_1000008026" description="Sugar fermentation stimulation protein homolog">
    <location>
        <begin position="1"/>
        <end position="234"/>
    </location>
</feature>